<accession>Q9RQ83</accession>
<reference key="1">
    <citation type="journal article" date="1999" name="Mol. Biol. Evol.">
        <title>Sequence evolution in bacterial endosymbionts having extreme base compositions.</title>
        <authorList>
            <person name="Clark M.A."/>
            <person name="Moran N.A."/>
            <person name="Baumann P."/>
        </authorList>
    </citation>
    <scope>NUCLEOTIDE SEQUENCE [GENOMIC DNA]</scope>
</reference>
<proteinExistence type="inferred from homology"/>
<name>HIS1_BUCMH</name>
<feature type="chain" id="PRO_0000151837" description="ATP phosphoribosyltransferase">
    <location>
        <begin position="1"/>
        <end position="299"/>
    </location>
</feature>
<sequence length="299" mass="33710">MIHNNRLRIVMQKNWKLSSDSKDLLVRCGIKINLCKQKLIAFSENMPIDVMCVRDDDIPGLIMDGIVDIGIIGENVLEEEVLSRKLRLDSVDYIKLKRLDFGVCRLSLAVPIDKEYTDIYCLNNSRIATSYPHLLKKYFDKKNIIFKSCMLNGSVEVAPRAGLSDAICDLVSTGATLEANGLREVQIIFRSKACLICKTGNISVEKQNVINTLMTRIQGVIKARESKYIMLHAPIKKLEEVIDLLHGAERPTILKLAGDDSRVAMHMVSSETLFWETMEKLKLLGASSILVLPIEKMME</sequence>
<evidence type="ECO:0000255" key="1">
    <source>
        <dbReference type="HAMAP-Rule" id="MF_00079"/>
    </source>
</evidence>
<organism>
    <name type="scientific">Buchnera aphidicola subsp. Melaphis rhois</name>
    <dbReference type="NCBI Taxonomy" id="118103"/>
    <lineage>
        <taxon>Bacteria</taxon>
        <taxon>Pseudomonadati</taxon>
        <taxon>Pseudomonadota</taxon>
        <taxon>Gammaproteobacteria</taxon>
        <taxon>Enterobacterales</taxon>
        <taxon>Erwiniaceae</taxon>
        <taxon>Buchnera</taxon>
    </lineage>
</organism>
<gene>
    <name evidence="1" type="primary">hisG</name>
</gene>
<dbReference type="EC" id="2.4.2.17" evidence="1"/>
<dbReference type="EMBL" id="AF129283">
    <property type="protein sequence ID" value="AAF13775.1"/>
    <property type="molecule type" value="Genomic_DNA"/>
</dbReference>
<dbReference type="SMR" id="Q9RQ83"/>
<dbReference type="UniPathway" id="UPA00031">
    <property type="reaction ID" value="UER00006"/>
</dbReference>
<dbReference type="GO" id="GO:0005737">
    <property type="term" value="C:cytoplasm"/>
    <property type="evidence" value="ECO:0007669"/>
    <property type="project" value="UniProtKB-SubCell"/>
</dbReference>
<dbReference type="GO" id="GO:0005524">
    <property type="term" value="F:ATP binding"/>
    <property type="evidence" value="ECO:0007669"/>
    <property type="project" value="UniProtKB-KW"/>
</dbReference>
<dbReference type="GO" id="GO:0003879">
    <property type="term" value="F:ATP phosphoribosyltransferase activity"/>
    <property type="evidence" value="ECO:0007669"/>
    <property type="project" value="UniProtKB-UniRule"/>
</dbReference>
<dbReference type="GO" id="GO:0000287">
    <property type="term" value="F:magnesium ion binding"/>
    <property type="evidence" value="ECO:0007669"/>
    <property type="project" value="UniProtKB-UniRule"/>
</dbReference>
<dbReference type="GO" id="GO:0000105">
    <property type="term" value="P:L-histidine biosynthetic process"/>
    <property type="evidence" value="ECO:0007669"/>
    <property type="project" value="UniProtKB-UniRule"/>
</dbReference>
<dbReference type="FunFam" id="3.30.70.120:FF:000002">
    <property type="entry name" value="ATP phosphoribosyltransferase"/>
    <property type="match status" value="1"/>
</dbReference>
<dbReference type="FunFam" id="3.40.190.10:FF:000008">
    <property type="entry name" value="ATP phosphoribosyltransferase"/>
    <property type="match status" value="1"/>
</dbReference>
<dbReference type="Gene3D" id="3.30.70.120">
    <property type="match status" value="1"/>
</dbReference>
<dbReference type="Gene3D" id="3.40.190.10">
    <property type="entry name" value="Periplasmic binding protein-like II"/>
    <property type="match status" value="2"/>
</dbReference>
<dbReference type="HAMAP" id="MF_00079">
    <property type="entry name" value="HisG_Long"/>
    <property type="match status" value="1"/>
</dbReference>
<dbReference type="InterPro" id="IPR020621">
    <property type="entry name" value="ATP-PRT_HisG_long"/>
</dbReference>
<dbReference type="InterPro" id="IPR013820">
    <property type="entry name" value="ATP_PRibTrfase_cat"/>
</dbReference>
<dbReference type="InterPro" id="IPR018198">
    <property type="entry name" value="ATP_PRibTrfase_CS"/>
</dbReference>
<dbReference type="InterPro" id="IPR001348">
    <property type="entry name" value="ATP_PRibTrfase_HisG"/>
</dbReference>
<dbReference type="InterPro" id="IPR013115">
    <property type="entry name" value="HisG_C"/>
</dbReference>
<dbReference type="InterPro" id="IPR011322">
    <property type="entry name" value="N-reg_PII-like_a/b"/>
</dbReference>
<dbReference type="InterPro" id="IPR015867">
    <property type="entry name" value="N-reg_PII/ATP_PRibTrfase_C"/>
</dbReference>
<dbReference type="NCBIfam" id="TIGR00070">
    <property type="entry name" value="hisG"/>
    <property type="match status" value="1"/>
</dbReference>
<dbReference type="NCBIfam" id="TIGR03455">
    <property type="entry name" value="HisG_C-term"/>
    <property type="match status" value="1"/>
</dbReference>
<dbReference type="PANTHER" id="PTHR21403:SF8">
    <property type="entry name" value="ATP PHOSPHORIBOSYLTRANSFERASE"/>
    <property type="match status" value="1"/>
</dbReference>
<dbReference type="PANTHER" id="PTHR21403">
    <property type="entry name" value="ATP PHOSPHORIBOSYLTRANSFERASE ATP-PRTASE"/>
    <property type="match status" value="1"/>
</dbReference>
<dbReference type="Pfam" id="PF01634">
    <property type="entry name" value="HisG"/>
    <property type="match status" value="1"/>
</dbReference>
<dbReference type="Pfam" id="PF08029">
    <property type="entry name" value="HisG_C"/>
    <property type="match status" value="1"/>
</dbReference>
<dbReference type="SUPFAM" id="SSF54913">
    <property type="entry name" value="GlnB-like"/>
    <property type="match status" value="1"/>
</dbReference>
<dbReference type="SUPFAM" id="SSF53850">
    <property type="entry name" value="Periplasmic binding protein-like II"/>
    <property type="match status" value="1"/>
</dbReference>
<dbReference type="PROSITE" id="PS01316">
    <property type="entry name" value="ATP_P_PHORIBOSYLTR"/>
    <property type="match status" value="1"/>
</dbReference>
<protein>
    <recommendedName>
        <fullName evidence="1">ATP phosphoribosyltransferase</fullName>
        <shortName evidence="1">ATP-PRT</shortName>
        <shortName evidence="1">ATP-PRTase</shortName>
        <ecNumber evidence="1">2.4.2.17</ecNumber>
    </recommendedName>
</protein>
<comment type="function">
    <text evidence="1">Catalyzes the condensation of ATP and 5-phosphoribose 1-diphosphate to form N'-(5'-phosphoribosyl)-ATP (PR-ATP). Has a crucial role in the pathway because the rate of histidine biosynthesis seems to be controlled primarily by regulation of HisG enzymatic activity.</text>
</comment>
<comment type="catalytic activity">
    <reaction evidence="1">
        <text>1-(5-phospho-beta-D-ribosyl)-ATP + diphosphate = 5-phospho-alpha-D-ribose 1-diphosphate + ATP</text>
        <dbReference type="Rhea" id="RHEA:18473"/>
        <dbReference type="ChEBI" id="CHEBI:30616"/>
        <dbReference type="ChEBI" id="CHEBI:33019"/>
        <dbReference type="ChEBI" id="CHEBI:58017"/>
        <dbReference type="ChEBI" id="CHEBI:73183"/>
        <dbReference type="EC" id="2.4.2.17"/>
    </reaction>
</comment>
<comment type="cofactor">
    <cofactor evidence="1">
        <name>Mg(2+)</name>
        <dbReference type="ChEBI" id="CHEBI:18420"/>
    </cofactor>
</comment>
<comment type="activity regulation">
    <text evidence="1">Feedback inhibited by histidine.</text>
</comment>
<comment type="pathway">
    <text evidence="1">Amino-acid biosynthesis; L-histidine biosynthesis; L-histidine from 5-phospho-alpha-D-ribose 1-diphosphate: step 1/9.</text>
</comment>
<comment type="subunit">
    <text evidence="1">Equilibrium between an active dimeric form, an inactive hexameric form and higher aggregates. Interconversion between the various forms is largely reversible and is influenced by the natural substrates and inhibitors of the enzyme.</text>
</comment>
<comment type="subcellular location">
    <subcellularLocation>
        <location evidence="1">Cytoplasm</location>
    </subcellularLocation>
</comment>
<comment type="similarity">
    <text evidence="1">Belongs to the ATP phosphoribosyltransferase family. Long subfamily.</text>
</comment>
<keyword id="KW-0028">Amino-acid biosynthesis</keyword>
<keyword id="KW-0067">ATP-binding</keyword>
<keyword id="KW-0963">Cytoplasm</keyword>
<keyword id="KW-0328">Glycosyltransferase</keyword>
<keyword id="KW-0368">Histidine biosynthesis</keyword>
<keyword id="KW-0460">Magnesium</keyword>
<keyword id="KW-0479">Metal-binding</keyword>
<keyword id="KW-0547">Nucleotide-binding</keyword>
<keyword id="KW-0808">Transferase</keyword>